<sequence length="792" mass="91812">MAAINPWASWGALTDQSWGMTAVDPWASWALCPQYPAWHVEGSLEEGRRATGLPAAQVQEPVTFKDVAVDFTQEEWGQLDLVQRTLYRDVMLETYGHLLSVGNQIAKPEVISLLEQGEEPWSVEQACPQRTCPEWVRNLESKALIPAQSIFEEEQSHGMKLERYIWDDPWFSRLEVLGCKDQLEMYHMNQSTAMRQMVFMQKQVLSQRSSEFCGLGAEFSQNLNFVPSQRVSQIEHFYKPDTHAQSWRCDSAIMYADKVTCENNDYDKTVYQSIQPIYPARIQTGDNLFKCTDAVKSFNHIIHFGDHKGIHTGEKLYEYKECHQIFNQSPSFNEHPRLHVGENQYNYKEYENIFYFSSFMEHQKIGTVEKAYKYNEWEKVFGYDSFLTQHTSTYTAEKPYDYNECGTSFIWSSYLIQHKKTHTGEKPYECDKCGKVFRNRSALTKHERTHTGIKPYECNKCGKAFSWNSHLIVHKRIHTGEKPYVCNECGKSFNWNSHLIGHQRTHTGEKPFECTECGKSFSWSSHLIAHMRMHTGEKPFKCDECEKAFRDYSALSKHERTHSGAKPYKCTECGKSFSWSSHLIAHQRTHTGEKPYNCQECGKAFRERSALTKHEIIHSGIKPYECNKCGKSCSQMAHLVRHQRTHTGEKPYECNKCGKSFSQSCHLVAHRRIHTGEKPYKCNQCERSFNCSSHLIAHRRTHTGEKPYRCNECGKAFNESSSLIVHLRNHTGEKPYKCNHCEKAFCKNSSLIIHQRMHSGEKRFICSECGKAFSGHSALLQHQRNHSEEKLN</sequence>
<comment type="function">
    <text evidence="3">May act as a transcriptional repressor.</text>
</comment>
<comment type="subcellular location">
    <subcellularLocation>
        <location evidence="3">Nucleus</location>
    </subcellularLocation>
</comment>
<comment type="tissue specificity">
    <text evidence="3">Widely expressed in adult and fetal tissues.</text>
</comment>
<comment type="similarity">
    <text evidence="4">Belongs to the krueppel C2H2-type zinc-finger protein family.</text>
</comment>
<comment type="sequence caution" evidence="4">
    <conflict type="erroneous initiation">
        <sequence resource="EMBL-CDS" id="BAB47481"/>
    </conflict>
    <text>Extended N-terminus.</text>
</comment>
<proteinExistence type="evidence at protein level"/>
<reference key="1">
    <citation type="submission" date="2001-12" db="EMBL/GenBank/DDBJ databases">
        <title>Characterization of a novel Kruppel-like zinc finger gene, ZNF328, strongly expressed in early human brain.</title>
        <authorList>
            <person name="Wang S."/>
            <person name="Yuan W."/>
            <person name="Dai Q."/>
            <person name="Zhu C."/>
            <person name="Luo K."/>
            <person name="Li Y."/>
            <person name="Zeng W."/>
            <person name="Wang Y."/>
            <person name="Wu X."/>
        </authorList>
    </citation>
    <scope>NUCLEOTIDE SEQUENCE [MRNA]</scope>
</reference>
<reference key="2">
    <citation type="journal article" date="2001" name="DNA Res.">
        <title>Prediction of the coding sequences of unidentified human genes. XX. The complete sequences of 100 new cDNA clones from brain which code for large proteins in vitro.</title>
        <authorList>
            <person name="Nagase T."/>
            <person name="Nakayama M."/>
            <person name="Nakajima D."/>
            <person name="Kikuno R."/>
            <person name="Ohara O."/>
        </authorList>
    </citation>
    <scope>NUCLEOTIDE SEQUENCE [LARGE SCALE MRNA]</scope>
    <source>
        <tissue>Brain</tissue>
    </source>
</reference>
<reference key="3">
    <citation type="journal article" date="2004" name="Nat. Genet.">
        <title>Complete sequencing and characterization of 21,243 full-length human cDNAs.</title>
        <authorList>
            <person name="Ota T."/>
            <person name="Suzuki Y."/>
            <person name="Nishikawa T."/>
            <person name="Otsuki T."/>
            <person name="Sugiyama T."/>
            <person name="Irie R."/>
            <person name="Wakamatsu A."/>
            <person name="Hayashi K."/>
            <person name="Sato H."/>
            <person name="Nagai K."/>
            <person name="Kimura K."/>
            <person name="Makita H."/>
            <person name="Sekine M."/>
            <person name="Obayashi M."/>
            <person name="Nishi T."/>
            <person name="Shibahara T."/>
            <person name="Tanaka T."/>
            <person name="Ishii S."/>
            <person name="Yamamoto J."/>
            <person name="Saito K."/>
            <person name="Kawai Y."/>
            <person name="Isono Y."/>
            <person name="Nakamura Y."/>
            <person name="Nagahari K."/>
            <person name="Murakami K."/>
            <person name="Yasuda T."/>
            <person name="Iwayanagi T."/>
            <person name="Wagatsuma M."/>
            <person name="Shiratori A."/>
            <person name="Sudo H."/>
            <person name="Hosoiri T."/>
            <person name="Kaku Y."/>
            <person name="Kodaira H."/>
            <person name="Kondo H."/>
            <person name="Sugawara M."/>
            <person name="Takahashi M."/>
            <person name="Kanda K."/>
            <person name="Yokoi T."/>
            <person name="Furuya T."/>
            <person name="Kikkawa E."/>
            <person name="Omura Y."/>
            <person name="Abe K."/>
            <person name="Kamihara K."/>
            <person name="Katsuta N."/>
            <person name="Sato K."/>
            <person name="Tanikawa M."/>
            <person name="Yamazaki M."/>
            <person name="Ninomiya K."/>
            <person name="Ishibashi T."/>
            <person name="Yamashita H."/>
            <person name="Murakawa K."/>
            <person name="Fujimori K."/>
            <person name="Tanai H."/>
            <person name="Kimata M."/>
            <person name="Watanabe M."/>
            <person name="Hiraoka S."/>
            <person name="Chiba Y."/>
            <person name="Ishida S."/>
            <person name="Ono Y."/>
            <person name="Takiguchi S."/>
            <person name="Watanabe S."/>
            <person name="Yosida M."/>
            <person name="Hotuta T."/>
            <person name="Kusano J."/>
            <person name="Kanehori K."/>
            <person name="Takahashi-Fujii A."/>
            <person name="Hara H."/>
            <person name="Tanase T.-O."/>
            <person name="Nomura Y."/>
            <person name="Togiya S."/>
            <person name="Komai F."/>
            <person name="Hara R."/>
            <person name="Takeuchi K."/>
            <person name="Arita M."/>
            <person name="Imose N."/>
            <person name="Musashino K."/>
            <person name="Yuuki H."/>
            <person name="Oshima A."/>
            <person name="Sasaki N."/>
            <person name="Aotsuka S."/>
            <person name="Yoshikawa Y."/>
            <person name="Matsunawa H."/>
            <person name="Ichihara T."/>
            <person name="Shiohata N."/>
            <person name="Sano S."/>
            <person name="Moriya S."/>
            <person name="Momiyama H."/>
            <person name="Satoh N."/>
            <person name="Takami S."/>
            <person name="Terashima Y."/>
            <person name="Suzuki O."/>
            <person name="Nakagawa S."/>
            <person name="Senoh A."/>
            <person name="Mizoguchi H."/>
            <person name="Goto Y."/>
            <person name="Shimizu F."/>
            <person name="Wakebe H."/>
            <person name="Hishigaki H."/>
            <person name="Watanabe T."/>
            <person name="Sugiyama A."/>
            <person name="Takemoto M."/>
            <person name="Kawakami B."/>
            <person name="Yamazaki M."/>
            <person name="Watanabe K."/>
            <person name="Kumagai A."/>
            <person name="Itakura S."/>
            <person name="Fukuzumi Y."/>
            <person name="Fujimori Y."/>
            <person name="Komiyama M."/>
            <person name="Tashiro H."/>
            <person name="Tanigami A."/>
            <person name="Fujiwara T."/>
            <person name="Ono T."/>
            <person name="Yamada K."/>
            <person name="Fujii Y."/>
            <person name="Ozaki K."/>
            <person name="Hirao M."/>
            <person name="Ohmori Y."/>
            <person name="Kawabata A."/>
            <person name="Hikiji T."/>
            <person name="Kobatake N."/>
            <person name="Inagaki H."/>
            <person name="Ikema Y."/>
            <person name="Okamoto S."/>
            <person name="Okitani R."/>
            <person name="Kawakami T."/>
            <person name="Noguchi S."/>
            <person name="Itoh T."/>
            <person name="Shigeta K."/>
            <person name="Senba T."/>
            <person name="Matsumura K."/>
            <person name="Nakajima Y."/>
            <person name="Mizuno T."/>
            <person name="Morinaga M."/>
            <person name="Sasaki M."/>
            <person name="Togashi T."/>
            <person name="Oyama M."/>
            <person name="Hata H."/>
            <person name="Watanabe M."/>
            <person name="Komatsu T."/>
            <person name="Mizushima-Sugano J."/>
            <person name="Satoh T."/>
            <person name="Shirai Y."/>
            <person name="Takahashi Y."/>
            <person name="Nakagawa K."/>
            <person name="Okumura K."/>
            <person name="Nagase T."/>
            <person name="Nomura N."/>
            <person name="Kikuchi H."/>
            <person name="Masuho Y."/>
            <person name="Yamashita R."/>
            <person name="Nakai K."/>
            <person name="Yada T."/>
            <person name="Nakamura Y."/>
            <person name="Ohara O."/>
            <person name="Isogai T."/>
            <person name="Sugano S."/>
        </authorList>
    </citation>
    <scope>NUCLEOTIDE SEQUENCE [LARGE SCALE MRNA]</scope>
    <source>
        <tissue>Uterus</tissue>
    </source>
</reference>
<reference key="4">
    <citation type="submission" date="2005-07" db="EMBL/GenBank/DDBJ databases">
        <authorList>
            <person name="Mural R.J."/>
            <person name="Istrail S."/>
            <person name="Sutton G.G."/>
            <person name="Florea L."/>
            <person name="Halpern A.L."/>
            <person name="Mobarry C.M."/>
            <person name="Lippert R."/>
            <person name="Walenz B."/>
            <person name="Shatkay H."/>
            <person name="Dew I."/>
            <person name="Miller J.R."/>
            <person name="Flanigan M.J."/>
            <person name="Edwards N.J."/>
            <person name="Bolanos R."/>
            <person name="Fasulo D."/>
            <person name="Halldorsson B.V."/>
            <person name="Hannenhalli S."/>
            <person name="Turner R."/>
            <person name="Yooseph S."/>
            <person name="Lu F."/>
            <person name="Nusskern D.R."/>
            <person name="Shue B.C."/>
            <person name="Zheng X.H."/>
            <person name="Zhong F."/>
            <person name="Delcher A.L."/>
            <person name="Huson D.H."/>
            <person name="Kravitz S.A."/>
            <person name="Mouchard L."/>
            <person name="Reinert K."/>
            <person name="Remington K.A."/>
            <person name="Clark A.G."/>
            <person name="Waterman M.S."/>
            <person name="Eichler E.E."/>
            <person name="Adams M.D."/>
            <person name="Hunkapiller M.W."/>
            <person name="Myers E.W."/>
            <person name="Venter J.C."/>
        </authorList>
    </citation>
    <scope>NUCLEOTIDE SEQUENCE [LARGE SCALE GENOMIC DNA]</scope>
</reference>
<reference key="5">
    <citation type="journal article" date="2004" name="Genome Res.">
        <title>The status, quality, and expansion of the NIH full-length cDNA project: the Mammalian Gene Collection (MGC).</title>
        <authorList>
            <consortium name="The MGC Project Team"/>
        </authorList>
    </citation>
    <scope>NUCLEOTIDE SEQUENCE [LARGE SCALE MRNA]</scope>
    <source>
        <tissue>Testis</tissue>
    </source>
</reference>
<reference key="6">
    <citation type="journal article" date="2005" name="Biochem. Biophys. Res. Commun.">
        <title>ZNF328, a novel human zinc-finger protein, suppresses transcriptional activities of SRE and AP-1.</title>
        <authorList>
            <person name="Ou Y."/>
            <person name="Wang S."/>
            <person name="Cai Z."/>
            <person name="Wang Y."/>
            <person name="Wang C."/>
            <person name="Li Y."/>
            <person name="Li F."/>
            <person name="Yuan W."/>
            <person name="Liu B."/>
            <person name="Wu X."/>
            <person name="Liu M."/>
        </authorList>
    </citation>
    <scope>FUNCTION</scope>
    <scope>SUBCELLULAR LOCATION</scope>
    <scope>TISSUE SPECIFICITY</scope>
</reference>
<dbReference type="EMBL" id="AF455357">
    <property type="protein sequence ID" value="AAL58442.1"/>
    <property type="molecule type" value="mRNA"/>
</dbReference>
<dbReference type="EMBL" id="AB058755">
    <property type="protein sequence ID" value="BAB47481.1"/>
    <property type="status" value="ALT_INIT"/>
    <property type="molecule type" value="mRNA"/>
</dbReference>
<dbReference type="EMBL" id="AK293097">
    <property type="protein sequence ID" value="BAF85786.1"/>
    <property type="molecule type" value="mRNA"/>
</dbReference>
<dbReference type="EMBL" id="CH471135">
    <property type="protein sequence ID" value="EAW72546.1"/>
    <property type="molecule type" value="Genomic_DNA"/>
</dbReference>
<dbReference type="EMBL" id="BC037209">
    <property type="protein sequence ID" value="AAH37209.1"/>
    <property type="molecule type" value="mRNA"/>
</dbReference>
<dbReference type="CCDS" id="CCDS12968.1"/>
<dbReference type="PIR" id="G42075">
    <property type="entry name" value="G42075"/>
</dbReference>
<dbReference type="RefSeq" id="NP_001334951.1">
    <property type="nucleotide sequence ID" value="NM_001348022.3"/>
</dbReference>
<dbReference type="RefSeq" id="NP_001334952.1">
    <property type="nucleotide sequence ID" value="NM_001348023.1"/>
</dbReference>
<dbReference type="RefSeq" id="NP_001334953.1">
    <property type="nucleotide sequence ID" value="NM_001348024.1"/>
</dbReference>
<dbReference type="RefSeq" id="NP_001334954.1">
    <property type="nucleotide sequence ID" value="NM_001348025.1"/>
</dbReference>
<dbReference type="RefSeq" id="NP_079303.2">
    <property type="nucleotide sequence ID" value="NM_025027.4"/>
</dbReference>
<dbReference type="SMR" id="Q8WXB4"/>
<dbReference type="BioGRID" id="123110">
    <property type="interactions" value="10"/>
</dbReference>
<dbReference type="FunCoup" id="Q8WXB4">
    <property type="interactions" value="512"/>
</dbReference>
<dbReference type="IntAct" id="Q8WXB4">
    <property type="interactions" value="3"/>
</dbReference>
<dbReference type="STRING" id="9606.ENSP00000343617"/>
<dbReference type="iPTMnet" id="Q8WXB4"/>
<dbReference type="PhosphoSitePlus" id="Q8WXB4"/>
<dbReference type="SwissPalm" id="Q8WXB4"/>
<dbReference type="BioMuta" id="ZNF606"/>
<dbReference type="DMDM" id="30921549"/>
<dbReference type="jPOST" id="Q8WXB4"/>
<dbReference type="MassIVE" id="Q8WXB4"/>
<dbReference type="PaxDb" id="9606-ENSP00000343617"/>
<dbReference type="PeptideAtlas" id="Q8WXB4"/>
<dbReference type="ProteomicsDB" id="75004"/>
<dbReference type="Antibodypedia" id="19675">
    <property type="antibodies" value="128 antibodies from 20 providers"/>
</dbReference>
<dbReference type="DNASU" id="80095"/>
<dbReference type="Ensembl" id="ENST00000341164.9">
    <property type="protein sequence ID" value="ENSP00000343617.4"/>
    <property type="gene ID" value="ENSG00000166704.13"/>
</dbReference>
<dbReference type="Ensembl" id="ENST00000551380.7">
    <property type="protein sequence ID" value="ENSP00000446972.2"/>
    <property type="gene ID" value="ENSG00000166704.13"/>
</dbReference>
<dbReference type="GeneID" id="80095"/>
<dbReference type="KEGG" id="hsa:80095"/>
<dbReference type="MANE-Select" id="ENST00000551380.7">
    <property type="protein sequence ID" value="ENSP00000446972.2"/>
    <property type="RefSeq nucleotide sequence ID" value="NM_001348022.3"/>
    <property type="RefSeq protein sequence ID" value="NP_001334951.1"/>
</dbReference>
<dbReference type="UCSC" id="uc002qqw.4">
    <property type="organism name" value="human"/>
</dbReference>
<dbReference type="AGR" id="HGNC:25879"/>
<dbReference type="CTD" id="80095"/>
<dbReference type="DisGeNET" id="80095"/>
<dbReference type="GeneCards" id="ZNF606"/>
<dbReference type="HGNC" id="HGNC:25879">
    <property type="gene designation" value="ZNF606"/>
</dbReference>
<dbReference type="HPA" id="ENSG00000166704">
    <property type="expression patterns" value="Low tissue specificity"/>
</dbReference>
<dbReference type="MIM" id="613905">
    <property type="type" value="gene"/>
</dbReference>
<dbReference type="neXtProt" id="NX_Q8WXB4"/>
<dbReference type="OpenTargets" id="ENSG00000166704"/>
<dbReference type="PharmGKB" id="PA134931984"/>
<dbReference type="VEuPathDB" id="HostDB:ENSG00000166704"/>
<dbReference type="eggNOG" id="KOG1721">
    <property type="taxonomic scope" value="Eukaryota"/>
</dbReference>
<dbReference type="GeneTree" id="ENSGT00940000161820"/>
<dbReference type="HOGENOM" id="CLU_002678_44_5_1"/>
<dbReference type="InParanoid" id="Q8WXB4"/>
<dbReference type="OMA" id="FGDHKGM"/>
<dbReference type="OrthoDB" id="9411774at2759"/>
<dbReference type="PAN-GO" id="Q8WXB4">
    <property type="GO annotations" value="4 GO annotations based on evolutionary models"/>
</dbReference>
<dbReference type="PhylomeDB" id="Q8WXB4"/>
<dbReference type="TreeFam" id="TF350822"/>
<dbReference type="PathwayCommons" id="Q8WXB4"/>
<dbReference type="Reactome" id="R-HSA-212436">
    <property type="pathway name" value="Generic Transcription Pathway"/>
</dbReference>
<dbReference type="SignaLink" id="Q8WXB4"/>
<dbReference type="BioGRID-ORCS" id="80095">
    <property type="hits" value="14 hits in 1175 CRISPR screens"/>
</dbReference>
<dbReference type="ChiTaRS" id="ZNF606">
    <property type="organism name" value="human"/>
</dbReference>
<dbReference type="GenomeRNAi" id="80095"/>
<dbReference type="Pharos" id="Q8WXB4">
    <property type="development level" value="Tdark"/>
</dbReference>
<dbReference type="PRO" id="PR:Q8WXB4"/>
<dbReference type="Proteomes" id="UP000005640">
    <property type="component" value="Chromosome 19"/>
</dbReference>
<dbReference type="RNAct" id="Q8WXB4">
    <property type="molecule type" value="protein"/>
</dbReference>
<dbReference type="Bgee" id="ENSG00000166704">
    <property type="expression patterns" value="Expressed in secondary oocyte and 162 other cell types or tissues"/>
</dbReference>
<dbReference type="ExpressionAtlas" id="Q8WXB4">
    <property type="expression patterns" value="baseline and differential"/>
</dbReference>
<dbReference type="GO" id="GO:0005654">
    <property type="term" value="C:nucleoplasm"/>
    <property type="evidence" value="ECO:0000314"/>
    <property type="project" value="HPA"/>
</dbReference>
<dbReference type="GO" id="GO:0005634">
    <property type="term" value="C:nucleus"/>
    <property type="evidence" value="ECO:0000318"/>
    <property type="project" value="GO_Central"/>
</dbReference>
<dbReference type="GO" id="GO:0003677">
    <property type="term" value="F:DNA binding"/>
    <property type="evidence" value="ECO:0007669"/>
    <property type="project" value="UniProtKB-KW"/>
</dbReference>
<dbReference type="GO" id="GO:0008270">
    <property type="term" value="F:zinc ion binding"/>
    <property type="evidence" value="ECO:0007669"/>
    <property type="project" value="UniProtKB-KW"/>
</dbReference>
<dbReference type="GO" id="GO:0006357">
    <property type="term" value="P:regulation of transcription by RNA polymerase II"/>
    <property type="evidence" value="ECO:0000318"/>
    <property type="project" value="GO_Central"/>
</dbReference>
<dbReference type="CDD" id="cd07765">
    <property type="entry name" value="KRAB_A-box"/>
    <property type="match status" value="1"/>
</dbReference>
<dbReference type="FunFam" id="3.30.160.60:FF:000295">
    <property type="entry name" value="zinc finger protein 19"/>
    <property type="match status" value="1"/>
</dbReference>
<dbReference type="FunFam" id="3.30.160.60:FF:001530">
    <property type="entry name" value="Zinc finger protein 268"/>
    <property type="match status" value="1"/>
</dbReference>
<dbReference type="FunFam" id="3.30.160.60:FF:000016">
    <property type="entry name" value="zinc finger protein 37 homolog"/>
    <property type="match status" value="3"/>
</dbReference>
<dbReference type="FunFam" id="3.30.160.60:FF:001498">
    <property type="entry name" value="Zinc finger protein 404"/>
    <property type="match status" value="1"/>
</dbReference>
<dbReference type="FunFam" id="3.30.160.60:FF:000069">
    <property type="entry name" value="Zinc finger protein 572"/>
    <property type="match status" value="2"/>
</dbReference>
<dbReference type="FunFam" id="3.30.160.60:FF:000367">
    <property type="entry name" value="Zinc finger protein 572"/>
    <property type="match status" value="1"/>
</dbReference>
<dbReference type="FunFam" id="3.30.160.60:FF:002513">
    <property type="entry name" value="Zinc finger protein 606"/>
    <property type="match status" value="1"/>
</dbReference>
<dbReference type="FunFam" id="3.30.160.60:FF:001036">
    <property type="entry name" value="zinc finger protein 606 isoform X1"/>
    <property type="match status" value="3"/>
</dbReference>
<dbReference type="FunFam" id="3.30.160.60:FF:000344">
    <property type="entry name" value="zinc finger protein 90 homolog"/>
    <property type="match status" value="1"/>
</dbReference>
<dbReference type="Gene3D" id="6.10.140.140">
    <property type="match status" value="1"/>
</dbReference>
<dbReference type="Gene3D" id="3.30.160.60">
    <property type="entry name" value="Classic Zinc Finger"/>
    <property type="match status" value="16"/>
</dbReference>
<dbReference type="InterPro" id="IPR001909">
    <property type="entry name" value="KRAB"/>
</dbReference>
<dbReference type="InterPro" id="IPR036051">
    <property type="entry name" value="KRAB_dom_sf"/>
</dbReference>
<dbReference type="InterPro" id="IPR036236">
    <property type="entry name" value="Znf_C2H2_sf"/>
</dbReference>
<dbReference type="InterPro" id="IPR013087">
    <property type="entry name" value="Znf_C2H2_type"/>
</dbReference>
<dbReference type="PANTHER" id="PTHR24399">
    <property type="entry name" value="ZINC FINGER AND BTB DOMAIN-CONTAINING"/>
    <property type="match status" value="1"/>
</dbReference>
<dbReference type="PANTHER" id="PTHR24399:SF74">
    <property type="entry name" value="ZINC FINGER PROTEIN 606"/>
    <property type="match status" value="1"/>
</dbReference>
<dbReference type="Pfam" id="PF01352">
    <property type="entry name" value="KRAB"/>
    <property type="match status" value="1"/>
</dbReference>
<dbReference type="Pfam" id="PF00096">
    <property type="entry name" value="zf-C2H2"/>
    <property type="match status" value="12"/>
</dbReference>
<dbReference type="SMART" id="SM00349">
    <property type="entry name" value="KRAB"/>
    <property type="match status" value="1"/>
</dbReference>
<dbReference type="SMART" id="SM00355">
    <property type="entry name" value="ZnF_C2H2"/>
    <property type="match status" value="15"/>
</dbReference>
<dbReference type="SUPFAM" id="SSF57667">
    <property type="entry name" value="beta-beta-alpha zinc fingers"/>
    <property type="match status" value="9"/>
</dbReference>
<dbReference type="SUPFAM" id="SSF109640">
    <property type="entry name" value="KRAB domain (Kruppel-associated box)"/>
    <property type="match status" value="1"/>
</dbReference>
<dbReference type="PROSITE" id="PS50805">
    <property type="entry name" value="KRAB"/>
    <property type="match status" value="1"/>
</dbReference>
<dbReference type="PROSITE" id="PS00028">
    <property type="entry name" value="ZINC_FINGER_C2H2_1"/>
    <property type="match status" value="13"/>
</dbReference>
<dbReference type="PROSITE" id="PS50157">
    <property type="entry name" value="ZINC_FINGER_C2H2_2"/>
    <property type="match status" value="16"/>
</dbReference>
<organism>
    <name type="scientific">Homo sapiens</name>
    <name type="common">Human</name>
    <dbReference type="NCBI Taxonomy" id="9606"/>
    <lineage>
        <taxon>Eukaryota</taxon>
        <taxon>Metazoa</taxon>
        <taxon>Chordata</taxon>
        <taxon>Craniata</taxon>
        <taxon>Vertebrata</taxon>
        <taxon>Euteleostomi</taxon>
        <taxon>Mammalia</taxon>
        <taxon>Eutheria</taxon>
        <taxon>Euarchontoglires</taxon>
        <taxon>Primates</taxon>
        <taxon>Haplorrhini</taxon>
        <taxon>Catarrhini</taxon>
        <taxon>Hominidae</taxon>
        <taxon>Homo</taxon>
    </lineage>
</organism>
<accession>Q8WXB4</accession>
<accession>A8KAN2</accession>
<accession>Q8NE04</accession>
<accession>Q96JH5</accession>
<name>ZN606_HUMAN</name>
<feature type="chain" id="PRO_0000047688" description="Zinc finger protein 606">
    <location>
        <begin position="1"/>
        <end position="792"/>
    </location>
</feature>
<feature type="domain" description="KRAB" evidence="2">
    <location>
        <begin position="62"/>
        <end position="133"/>
    </location>
</feature>
<feature type="zinc finger region" description="C2H2-type 1; degenerate" evidence="1">
    <location>
        <begin position="289"/>
        <end position="311"/>
    </location>
</feature>
<feature type="zinc finger region" description="C2H2-type 2; degenerate" evidence="1">
    <location>
        <begin position="317"/>
        <end position="344"/>
    </location>
</feature>
<feature type="zinc finger region" description="C2H2-type 3; degenerate" evidence="1">
    <location>
        <begin position="400"/>
        <end position="422"/>
    </location>
</feature>
<feature type="zinc finger region" description="C2H2-type 4" evidence="1">
    <location>
        <begin position="428"/>
        <end position="450"/>
    </location>
</feature>
<feature type="zinc finger region" description="C2H2-type 5" evidence="1">
    <location>
        <begin position="456"/>
        <end position="478"/>
    </location>
</feature>
<feature type="zinc finger region" description="C2H2-type 6" evidence="1">
    <location>
        <begin position="484"/>
        <end position="506"/>
    </location>
</feature>
<feature type="zinc finger region" description="C2H2-type 7" evidence="1">
    <location>
        <begin position="512"/>
        <end position="534"/>
    </location>
</feature>
<feature type="zinc finger region" description="C2H2-type 8" evidence="1">
    <location>
        <begin position="540"/>
        <end position="562"/>
    </location>
</feature>
<feature type="zinc finger region" description="C2H2-type 9" evidence="1">
    <location>
        <begin position="568"/>
        <end position="590"/>
    </location>
</feature>
<feature type="zinc finger region" description="C2H2-type 10" evidence="1">
    <location>
        <begin position="596"/>
        <end position="618"/>
    </location>
</feature>
<feature type="zinc finger region" description="C2H2-type 11" evidence="1">
    <location>
        <begin position="624"/>
        <end position="646"/>
    </location>
</feature>
<feature type="zinc finger region" description="C2H2-type 12" evidence="1">
    <location>
        <begin position="652"/>
        <end position="674"/>
    </location>
</feature>
<feature type="zinc finger region" description="C2H2-type 13" evidence="1">
    <location>
        <begin position="680"/>
        <end position="702"/>
    </location>
</feature>
<feature type="zinc finger region" description="C2H2-type 14" evidence="1">
    <location>
        <begin position="708"/>
        <end position="730"/>
    </location>
</feature>
<feature type="zinc finger region" description="C2H2-type 15" evidence="1">
    <location>
        <begin position="736"/>
        <end position="758"/>
    </location>
</feature>
<feature type="zinc finger region" description="C2H2-type 16" evidence="1">
    <location>
        <begin position="764"/>
        <end position="786"/>
    </location>
</feature>
<feature type="sequence variant" id="VAR_052872" description="In dbSNP:rs11673029.">
    <original>S</original>
    <variation>G</variation>
    <location>
        <position position="141"/>
    </location>
</feature>
<feature type="sequence conflict" description="In Ref. 5; AAH37209." evidence="4" ref="5">
    <original>V</original>
    <variation>I</variation>
    <location>
        <position position="725"/>
    </location>
</feature>
<keyword id="KW-0238">DNA-binding</keyword>
<keyword id="KW-0479">Metal-binding</keyword>
<keyword id="KW-0539">Nucleus</keyword>
<keyword id="KW-1267">Proteomics identification</keyword>
<keyword id="KW-1185">Reference proteome</keyword>
<keyword id="KW-0677">Repeat</keyword>
<keyword id="KW-0678">Repressor</keyword>
<keyword id="KW-0804">Transcription</keyword>
<keyword id="KW-0805">Transcription regulation</keyword>
<keyword id="KW-0862">Zinc</keyword>
<keyword id="KW-0863">Zinc-finger</keyword>
<gene>
    <name type="primary">ZNF606</name>
    <name type="synonym">KIAA1852</name>
    <name type="synonym">ZNF328</name>
</gene>
<protein>
    <recommendedName>
        <fullName>Zinc finger protein 606</fullName>
    </recommendedName>
    <alternativeName>
        <fullName>Zinc finger protein 328</fullName>
    </alternativeName>
</protein>
<evidence type="ECO:0000255" key="1">
    <source>
        <dbReference type="PROSITE-ProRule" id="PRU00042"/>
    </source>
</evidence>
<evidence type="ECO:0000255" key="2">
    <source>
        <dbReference type="PROSITE-ProRule" id="PRU00119"/>
    </source>
</evidence>
<evidence type="ECO:0000269" key="3">
    <source>
    </source>
</evidence>
<evidence type="ECO:0000305" key="4"/>